<gene>
    <name evidence="1" type="primary">hrcA</name>
    <name type="ordered locus">XCV1562</name>
</gene>
<comment type="function">
    <text evidence="1">Negative regulator of class I heat shock genes (grpE-dnaK-dnaJ and groELS operons). Prevents heat-shock induction of these operons.</text>
</comment>
<comment type="similarity">
    <text evidence="1">Belongs to the HrcA family.</text>
</comment>
<evidence type="ECO:0000255" key="1">
    <source>
        <dbReference type="HAMAP-Rule" id="MF_00081"/>
    </source>
</evidence>
<accession>Q3BVC0</accession>
<sequence length="350" mass="38230">MRASQSPMLDPRARQLLRTLIARYIRDGEPVGSKTLAQHAGLDVSPATIRNILADLEDVGLLSSPHTSAGRVPTAHGYRVFVDSLVQMQPPGEEEVRRLRAELASGNGTQSLLGSASQMLSAMSHFVGVVSAPRREQFAFRHIDFVALDARRVLAILVFADNEVQNRVIEPRRAYEPAELERVANYLNAQFAGRALADIRACLLRELRMAKSEMEQLLAHSVDLASEALVPADAEDMVMAGQTRLMGVQDLSDLDRLRELFEAFASKREILQLLERTIQAPGVRIFIGEETGMVSLEDVSLVTAPYAANGQVLGVLGVIGPKRMAYDRLIPLVQTAADVLGAAMESPGTR</sequence>
<proteinExistence type="inferred from homology"/>
<feature type="chain" id="PRO_1000010478" description="Heat-inducible transcription repressor HrcA">
    <location>
        <begin position="1"/>
        <end position="350"/>
    </location>
</feature>
<reference key="1">
    <citation type="journal article" date="2005" name="J. Bacteriol.">
        <title>Insights into genome plasticity and pathogenicity of the plant pathogenic Bacterium Xanthomonas campestris pv. vesicatoria revealed by the complete genome sequence.</title>
        <authorList>
            <person name="Thieme F."/>
            <person name="Koebnik R."/>
            <person name="Bekel T."/>
            <person name="Berger C."/>
            <person name="Boch J."/>
            <person name="Buettner D."/>
            <person name="Caldana C."/>
            <person name="Gaigalat L."/>
            <person name="Goesmann A."/>
            <person name="Kay S."/>
            <person name="Kirchner O."/>
            <person name="Lanz C."/>
            <person name="Linke B."/>
            <person name="McHardy A.C."/>
            <person name="Meyer F."/>
            <person name="Mittenhuber G."/>
            <person name="Nies D.H."/>
            <person name="Niesbach-Kloesgen U."/>
            <person name="Patschkowski T."/>
            <person name="Rueckert C."/>
            <person name="Rupp O."/>
            <person name="Schneiker S."/>
            <person name="Schuster S.C."/>
            <person name="Vorhoelter F.J."/>
            <person name="Weber E."/>
            <person name="Puehler A."/>
            <person name="Bonas U."/>
            <person name="Bartels D."/>
            <person name="Kaiser O."/>
        </authorList>
    </citation>
    <scope>NUCLEOTIDE SEQUENCE [LARGE SCALE GENOMIC DNA]</scope>
    <source>
        <strain>85-10</strain>
    </source>
</reference>
<organism>
    <name type="scientific">Xanthomonas euvesicatoria pv. vesicatoria (strain 85-10)</name>
    <name type="common">Xanthomonas campestris pv. vesicatoria</name>
    <dbReference type="NCBI Taxonomy" id="316273"/>
    <lineage>
        <taxon>Bacteria</taxon>
        <taxon>Pseudomonadati</taxon>
        <taxon>Pseudomonadota</taxon>
        <taxon>Gammaproteobacteria</taxon>
        <taxon>Lysobacterales</taxon>
        <taxon>Lysobacteraceae</taxon>
        <taxon>Xanthomonas</taxon>
    </lineage>
</organism>
<protein>
    <recommendedName>
        <fullName evidence="1">Heat-inducible transcription repressor HrcA</fullName>
    </recommendedName>
</protein>
<keyword id="KW-0678">Repressor</keyword>
<keyword id="KW-0346">Stress response</keyword>
<keyword id="KW-0804">Transcription</keyword>
<keyword id="KW-0805">Transcription regulation</keyword>
<name>HRCA_XANE5</name>
<dbReference type="EMBL" id="AM039952">
    <property type="protein sequence ID" value="CAJ23194.1"/>
    <property type="molecule type" value="Genomic_DNA"/>
</dbReference>
<dbReference type="SMR" id="Q3BVC0"/>
<dbReference type="STRING" id="456327.BJD11_14820"/>
<dbReference type="KEGG" id="xcv:XCV1562"/>
<dbReference type="eggNOG" id="COG1420">
    <property type="taxonomic scope" value="Bacteria"/>
</dbReference>
<dbReference type="HOGENOM" id="CLU_050019_0_0_6"/>
<dbReference type="Proteomes" id="UP000007069">
    <property type="component" value="Chromosome"/>
</dbReference>
<dbReference type="GO" id="GO:0003677">
    <property type="term" value="F:DNA binding"/>
    <property type="evidence" value="ECO:0007669"/>
    <property type="project" value="InterPro"/>
</dbReference>
<dbReference type="GO" id="GO:0045892">
    <property type="term" value="P:negative regulation of DNA-templated transcription"/>
    <property type="evidence" value="ECO:0007669"/>
    <property type="project" value="UniProtKB-UniRule"/>
</dbReference>
<dbReference type="FunFam" id="3.30.390.60:FF:000007">
    <property type="entry name" value="Heat-inducible transcription repressor HrcA"/>
    <property type="match status" value="1"/>
</dbReference>
<dbReference type="Gene3D" id="3.30.450.40">
    <property type="match status" value="1"/>
</dbReference>
<dbReference type="Gene3D" id="3.30.390.60">
    <property type="entry name" value="Heat-inducible transcription repressor hrca homolog, domain 3"/>
    <property type="match status" value="1"/>
</dbReference>
<dbReference type="Gene3D" id="1.10.10.10">
    <property type="entry name" value="Winged helix-like DNA-binding domain superfamily/Winged helix DNA-binding domain"/>
    <property type="match status" value="1"/>
</dbReference>
<dbReference type="HAMAP" id="MF_00081">
    <property type="entry name" value="HrcA"/>
    <property type="match status" value="1"/>
</dbReference>
<dbReference type="InterPro" id="IPR029016">
    <property type="entry name" value="GAF-like_dom_sf"/>
</dbReference>
<dbReference type="InterPro" id="IPR002571">
    <property type="entry name" value="HrcA"/>
</dbReference>
<dbReference type="InterPro" id="IPR021153">
    <property type="entry name" value="HrcA_C"/>
</dbReference>
<dbReference type="InterPro" id="IPR036388">
    <property type="entry name" value="WH-like_DNA-bd_sf"/>
</dbReference>
<dbReference type="InterPro" id="IPR036390">
    <property type="entry name" value="WH_DNA-bd_sf"/>
</dbReference>
<dbReference type="InterPro" id="IPR005104">
    <property type="entry name" value="WHTH_HrcA_DNA-bd"/>
</dbReference>
<dbReference type="InterPro" id="IPR023120">
    <property type="entry name" value="WHTH_transcript_rep_HrcA_IDD"/>
</dbReference>
<dbReference type="NCBIfam" id="TIGR00331">
    <property type="entry name" value="hrcA"/>
    <property type="match status" value="1"/>
</dbReference>
<dbReference type="PANTHER" id="PTHR34824">
    <property type="entry name" value="HEAT-INDUCIBLE TRANSCRIPTION REPRESSOR HRCA"/>
    <property type="match status" value="1"/>
</dbReference>
<dbReference type="PANTHER" id="PTHR34824:SF1">
    <property type="entry name" value="HEAT-INDUCIBLE TRANSCRIPTION REPRESSOR HRCA"/>
    <property type="match status" value="1"/>
</dbReference>
<dbReference type="Pfam" id="PF01628">
    <property type="entry name" value="HrcA"/>
    <property type="match status" value="1"/>
</dbReference>
<dbReference type="Pfam" id="PF03444">
    <property type="entry name" value="HrcA_DNA-bdg"/>
    <property type="match status" value="1"/>
</dbReference>
<dbReference type="PIRSF" id="PIRSF005485">
    <property type="entry name" value="HrcA"/>
    <property type="match status" value="1"/>
</dbReference>
<dbReference type="SUPFAM" id="SSF55781">
    <property type="entry name" value="GAF domain-like"/>
    <property type="match status" value="1"/>
</dbReference>
<dbReference type="SUPFAM" id="SSF46785">
    <property type="entry name" value="Winged helix' DNA-binding domain"/>
    <property type="match status" value="1"/>
</dbReference>